<feature type="signal peptide" evidence="2">
    <location>
        <begin position="1"/>
        <end position="22"/>
    </location>
</feature>
<feature type="chain" id="PRO_0000013560" description="Heat shock 70 kDa protein 13">
    <location>
        <begin position="23"/>
        <end position="471"/>
    </location>
</feature>
<feature type="region of interest" description="Disordered" evidence="3">
    <location>
        <begin position="314"/>
        <end position="352"/>
    </location>
</feature>
<feature type="compositionally biased region" description="Basic and acidic residues" evidence="3">
    <location>
        <begin position="315"/>
        <end position="341"/>
    </location>
</feature>
<name>HSP13_PONAB</name>
<proteinExistence type="evidence at transcript level"/>
<protein>
    <recommendedName>
        <fullName>Heat shock 70 kDa protein 13</fullName>
    </recommendedName>
    <alternativeName>
        <fullName>Stress-70 protein chaperone microsome-associated 60 kDa protein</fullName>
    </alternativeName>
</protein>
<reference key="1">
    <citation type="submission" date="2004-11" db="EMBL/GenBank/DDBJ databases">
        <authorList>
            <consortium name="The German cDNA consortium"/>
        </authorList>
    </citation>
    <scope>NUCLEOTIDE SEQUENCE [LARGE SCALE MRNA]</scope>
    <source>
        <tissue>Brain cortex</tissue>
    </source>
</reference>
<sequence length="471" mass="51941">MAREMTILGSAVLTLLLAGYLAQQYLPLPTPKVIGIDLGTTYCSVGVFFPGTGKVKVIPDENGHISIPSMVSFTDNDVYVGYESVELADSNPQNTIYDAKRFIGKIFTPEELEAEIGRYPFKVLNKNGMVEFSVTSNETITVSPEYVGSRLLLKLKEMAEAYLGMPVANAVISVPAEFDLKQRNSTIEAANLAGLKILRVINEPTAAAMAYGLHKADVFHVLVIDLGGGTLDVSLLNKQGGMFLTRAMSGNNKLGGQDFNQRLLQYLYKQIYQTYGFVPSRKEEIHRLRQSVEMVKLNLTLHQSAQLSALLTVEEQDRKEPHSSDTELPKDKLSSADDHRVNSGFGRGLSDKKSGESQVLFETEISRKLFDTLNEDLFQKILVPIQQVLKEGHLEKTEIDEVVLVGGSTRIPRIRQVIQEFFGKDPNTSVDPDLAVVTGVAIQAGIDGGSWPLQVSALEIPNKHLQKTNFN</sequence>
<keyword id="KW-0067">ATP-binding</keyword>
<keyword id="KW-0256">Endoplasmic reticulum</keyword>
<keyword id="KW-0492">Microsome</keyword>
<keyword id="KW-0547">Nucleotide-binding</keyword>
<keyword id="KW-1185">Reference proteome</keyword>
<keyword id="KW-0732">Signal</keyword>
<comment type="function">
    <text evidence="1">Has peptide-independent ATPase activity.</text>
</comment>
<comment type="subunit">
    <text evidence="1">Binds UBQLN2.</text>
</comment>
<comment type="subcellular location">
    <subcellularLocation>
        <location evidence="1">Microsome</location>
    </subcellularLocation>
    <subcellularLocation>
        <location evidence="1">Endoplasmic reticulum</location>
    </subcellularLocation>
</comment>
<comment type="similarity">
    <text evidence="4">Belongs to the heat shock protein 70 family.</text>
</comment>
<organism>
    <name type="scientific">Pongo abelii</name>
    <name type="common">Sumatran orangutan</name>
    <name type="synonym">Pongo pygmaeus abelii</name>
    <dbReference type="NCBI Taxonomy" id="9601"/>
    <lineage>
        <taxon>Eukaryota</taxon>
        <taxon>Metazoa</taxon>
        <taxon>Chordata</taxon>
        <taxon>Craniata</taxon>
        <taxon>Vertebrata</taxon>
        <taxon>Euteleostomi</taxon>
        <taxon>Mammalia</taxon>
        <taxon>Eutheria</taxon>
        <taxon>Euarchontoglires</taxon>
        <taxon>Primates</taxon>
        <taxon>Haplorrhini</taxon>
        <taxon>Catarrhini</taxon>
        <taxon>Hominidae</taxon>
        <taxon>Pongo</taxon>
    </lineage>
</organism>
<gene>
    <name type="primary">HSPA13</name>
    <name type="synonym">STCH</name>
</gene>
<accession>Q5R8D9</accession>
<evidence type="ECO:0000250" key="1"/>
<evidence type="ECO:0000255" key="2"/>
<evidence type="ECO:0000256" key="3">
    <source>
        <dbReference type="SAM" id="MobiDB-lite"/>
    </source>
</evidence>
<evidence type="ECO:0000305" key="4"/>
<dbReference type="EMBL" id="CR859814">
    <property type="protein sequence ID" value="CAH91971.1"/>
    <property type="molecule type" value="mRNA"/>
</dbReference>
<dbReference type="RefSeq" id="NP_001126142.1">
    <property type="nucleotide sequence ID" value="NM_001132670.1"/>
</dbReference>
<dbReference type="SMR" id="Q5R8D9"/>
<dbReference type="FunCoup" id="Q5R8D9">
    <property type="interactions" value="2869"/>
</dbReference>
<dbReference type="STRING" id="9601.ENSPPYP00000012608"/>
<dbReference type="GeneID" id="100173100"/>
<dbReference type="KEGG" id="pon:100173100"/>
<dbReference type="CTD" id="6782"/>
<dbReference type="InParanoid" id="Q5R8D9"/>
<dbReference type="OrthoDB" id="2401965at2759"/>
<dbReference type="Proteomes" id="UP000001595">
    <property type="component" value="Unplaced"/>
</dbReference>
<dbReference type="GO" id="GO:0005783">
    <property type="term" value="C:endoplasmic reticulum"/>
    <property type="evidence" value="ECO:0007669"/>
    <property type="project" value="UniProtKB-SubCell"/>
</dbReference>
<dbReference type="GO" id="GO:0005524">
    <property type="term" value="F:ATP binding"/>
    <property type="evidence" value="ECO:0007669"/>
    <property type="project" value="UniProtKB-KW"/>
</dbReference>
<dbReference type="GO" id="GO:0140662">
    <property type="term" value="F:ATP-dependent protein folding chaperone"/>
    <property type="evidence" value="ECO:0007669"/>
    <property type="project" value="InterPro"/>
</dbReference>
<dbReference type="CDD" id="cd10237">
    <property type="entry name" value="ASKHA_NBD_HSP70_HSPA13"/>
    <property type="match status" value="1"/>
</dbReference>
<dbReference type="FunFam" id="3.30.30.30:FF:000007">
    <property type="entry name" value="Heat shock 70 kDa protein 13"/>
    <property type="match status" value="1"/>
</dbReference>
<dbReference type="FunFam" id="3.30.420.40:FF:000099">
    <property type="entry name" value="Heat shock 70 kDa protein 13"/>
    <property type="match status" value="1"/>
</dbReference>
<dbReference type="FunFam" id="3.30.420.40:FF:000103">
    <property type="entry name" value="Heat shock 70 kDa protein 13"/>
    <property type="match status" value="1"/>
</dbReference>
<dbReference type="FunFam" id="3.90.640.10:FF:000037">
    <property type="entry name" value="Heat shock 70 kDa protein 13"/>
    <property type="match status" value="1"/>
</dbReference>
<dbReference type="FunFam" id="3.30.420.40:FF:000110">
    <property type="entry name" value="heat shock 70 kDa protein 13 isoform X1"/>
    <property type="match status" value="1"/>
</dbReference>
<dbReference type="Gene3D" id="3.30.30.30">
    <property type="match status" value="1"/>
</dbReference>
<dbReference type="Gene3D" id="3.30.420.40">
    <property type="match status" value="2"/>
</dbReference>
<dbReference type="Gene3D" id="3.90.640.10">
    <property type="entry name" value="Actin, Chain A, domain 4"/>
    <property type="match status" value="1"/>
</dbReference>
<dbReference type="InterPro" id="IPR043129">
    <property type="entry name" value="ATPase_NBD"/>
</dbReference>
<dbReference type="InterPro" id="IPR018181">
    <property type="entry name" value="Heat_shock_70_CS"/>
</dbReference>
<dbReference type="InterPro" id="IPR013126">
    <property type="entry name" value="Hsp_70_fam"/>
</dbReference>
<dbReference type="InterPro" id="IPR042048">
    <property type="entry name" value="HSPA13"/>
</dbReference>
<dbReference type="PANTHER" id="PTHR19375">
    <property type="entry name" value="HEAT SHOCK PROTEIN 70KDA"/>
    <property type="match status" value="1"/>
</dbReference>
<dbReference type="Pfam" id="PF00012">
    <property type="entry name" value="HSP70"/>
    <property type="match status" value="2"/>
</dbReference>
<dbReference type="PRINTS" id="PR00301">
    <property type="entry name" value="HEATSHOCK70"/>
</dbReference>
<dbReference type="SUPFAM" id="SSF53067">
    <property type="entry name" value="Actin-like ATPase domain"/>
    <property type="match status" value="2"/>
</dbReference>
<dbReference type="PROSITE" id="PS00297">
    <property type="entry name" value="HSP70_1"/>
    <property type="match status" value="1"/>
</dbReference>
<dbReference type="PROSITE" id="PS00329">
    <property type="entry name" value="HSP70_2"/>
    <property type="match status" value="1"/>
</dbReference>
<dbReference type="PROSITE" id="PS01036">
    <property type="entry name" value="HSP70_3"/>
    <property type="match status" value="1"/>
</dbReference>